<dbReference type="EC" id="6.1.1.6" evidence="1"/>
<dbReference type="EMBL" id="AP008229">
    <property type="protein sequence ID" value="BAE69481.1"/>
    <property type="molecule type" value="Genomic_DNA"/>
</dbReference>
<dbReference type="RefSeq" id="WP_011408850.1">
    <property type="nucleotide sequence ID" value="NC_007705.1"/>
</dbReference>
<dbReference type="SMR" id="Q2P1U6"/>
<dbReference type="KEGG" id="xom:XOO2726"/>
<dbReference type="PATRIC" id="fig|291331.8.peg.3182"/>
<dbReference type="HOGENOM" id="CLU_008255_6_0_6"/>
<dbReference type="GO" id="GO:0005829">
    <property type="term" value="C:cytosol"/>
    <property type="evidence" value="ECO:0007669"/>
    <property type="project" value="TreeGrafter"/>
</dbReference>
<dbReference type="GO" id="GO:0005524">
    <property type="term" value="F:ATP binding"/>
    <property type="evidence" value="ECO:0007669"/>
    <property type="project" value="UniProtKB-UniRule"/>
</dbReference>
<dbReference type="GO" id="GO:0004824">
    <property type="term" value="F:lysine-tRNA ligase activity"/>
    <property type="evidence" value="ECO:0007669"/>
    <property type="project" value="UniProtKB-UniRule"/>
</dbReference>
<dbReference type="GO" id="GO:0000287">
    <property type="term" value="F:magnesium ion binding"/>
    <property type="evidence" value="ECO:0007669"/>
    <property type="project" value="UniProtKB-UniRule"/>
</dbReference>
<dbReference type="GO" id="GO:0000049">
    <property type="term" value="F:tRNA binding"/>
    <property type="evidence" value="ECO:0007669"/>
    <property type="project" value="TreeGrafter"/>
</dbReference>
<dbReference type="GO" id="GO:0006430">
    <property type="term" value="P:lysyl-tRNA aminoacylation"/>
    <property type="evidence" value="ECO:0007669"/>
    <property type="project" value="UniProtKB-UniRule"/>
</dbReference>
<dbReference type="CDD" id="cd00775">
    <property type="entry name" value="LysRS_core"/>
    <property type="match status" value="1"/>
</dbReference>
<dbReference type="CDD" id="cd04322">
    <property type="entry name" value="LysRS_N"/>
    <property type="match status" value="1"/>
</dbReference>
<dbReference type="FunFam" id="2.40.50.140:FF:000024">
    <property type="entry name" value="Lysine--tRNA ligase"/>
    <property type="match status" value="1"/>
</dbReference>
<dbReference type="FunFam" id="3.30.930.10:FF:000001">
    <property type="entry name" value="Lysine--tRNA ligase"/>
    <property type="match status" value="1"/>
</dbReference>
<dbReference type="Gene3D" id="3.30.930.10">
    <property type="entry name" value="Bira Bifunctional Protein, Domain 2"/>
    <property type="match status" value="1"/>
</dbReference>
<dbReference type="Gene3D" id="2.40.50.140">
    <property type="entry name" value="Nucleic acid-binding proteins"/>
    <property type="match status" value="1"/>
</dbReference>
<dbReference type="HAMAP" id="MF_00252">
    <property type="entry name" value="Lys_tRNA_synth_class2"/>
    <property type="match status" value="1"/>
</dbReference>
<dbReference type="InterPro" id="IPR004364">
    <property type="entry name" value="Aa-tRNA-synt_II"/>
</dbReference>
<dbReference type="InterPro" id="IPR006195">
    <property type="entry name" value="aa-tRNA-synth_II"/>
</dbReference>
<dbReference type="InterPro" id="IPR045864">
    <property type="entry name" value="aa-tRNA-synth_II/BPL/LPL"/>
</dbReference>
<dbReference type="InterPro" id="IPR002313">
    <property type="entry name" value="Lys-tRNA-ligase_II"/>
</dbReference>
<dbReference type="InterPro" id="IPR044136">
    <property type="entry name" value="Lys-tRNA-ligase_II_N"/>
</dbReference>
<dbReference type="InterPro" id="IPR018149">
    <property type="entry name" value="Lys-tRNA-synth_II_C"/>
</dbReference>
<dbReference type="InterPro" id="IPR012340">
    <property type="entry name" value="NA-bd_OB-fold"/>
</dbReference>
<dbReference type="InterPro" id="IPR004365">
    <property type="entry name" value="NA-bd_OB_tRNA"/>
</dbReference>
<dbReference type="NCBIfam" id="TIGR00499">
    <property type="entry name" value="lysS_bact"/>
    <property type="match status" value="1"/>
</dbReference>
<dbReference type="NCBIfam" id="NF001756">
    <property type="entry name" value="PRK00484.1"/>
    <property type="match status" value="1"/>
</dbReference>
<dbReference type="PANTHER" id="PTHR42918:SF15">
    <property type="entry name" value="LYSINE--TRNA LIGASE, CHLOROPLASTIC_MITOCHONDRIAL"/>
    <property type="match status" value="1"/>
</dbReference>
<dbReference type="PANTHER" id="PTHR42918">
    <property type="entry name" value="LYSYL-TRNA SYNTHETASE"/>
    <property type="match status" value="1"/>
</dbReference>
<dbReference type="Pfam" id="PF00152">
    <property type="entry name" value="tRNA-synt_2"/>
    <property type="match status" value="1"/>
</dbReference>
<dbReference type="Pfam" id="PF01336">
    <property type="entry name" value="tRNA_anti-codon"/>
    <property type="match status" value="1"/>
</dbReference>
<dbReference type="PRINTS" id="PR00982">
    <property type="entry name" value="TRNASYNTHLYS"/>
</dbReference>
<dbReference type="SUPFAM" id="SSF55681">
    <property type="entry name" value="Class II aaRS and biotin synthetases"/>
    <property type="match status" value="1"/>
</dbReference>
<dbReference type="SUPFAM" id="SSF50249">
    <property type="entry name" value="Nucleic acid-binding proteins"/>
    <property type="match status" value="1"/>
</dbReference>
<dbReference type="PROSITE" id="PS50862">
    <property type="entry name" value="AA_TRNA_LIGASE_II"/>
    <property type="match status" value="1"/>
</dbReference>
<keyword id="KW-0030">Aminoacyl-tRNA synthetase</keyword>
<keyword id="KW-0067">ATP-binding</keyword>
<keyword id="KW-0963">Cytoplasm</keyword>
<keyword id="KW-0436">Ligase</keyword>
<keyword id="KW-0460">Magnesium</keyword>
<keyword id="KW-0479">Metal-binding</keyword>
<keyword id="KW-0547">Nucleotide-binding</keyword>
<keyword id="KW-0648">Protein biosynthesis</keyword>
<protein>
    <recommendedName>
        <fullName evidence="1">Lysine--tRNA ligase</fullName>
        <ecNumber evidence="1">6.1.1.6</ecNumber>
    </recommendedName>
    <alternativeName>
        <fullName evidence="1">Lysyl-tRNA synthetase</fullName>
        <shortName evidence="1">LysRS</shortName>
    </alternativeName>
</protein>
<name>SYK_XANOM</name>
<organism>
    <name type="scientific">Xanthomonas oryzae pv. oryzae (strain MAFF 311018)</name>
    <dbReference type="NCBI Taxonomy" id="342109"/>
    <lineage>
        <taxon>Bacteria</taxon>
        <taxon>Pseudomonadati</taxon>
        <taxon>Pseudomonadota</taxon>
        <taxon>Gammaproteobacteria</taxon>
        <taxon>Lysobacterales</taxon>
        <taxon>Lysobacteraceae</taxon>
        <taxon>Xanthomonas</taxon>
    </lineage>
</organism>
<sequence length="505" mass="56865">MTEQIPAPQPPADENSLIAERRAKLGALRGQGIAYPNDFVREHFAGDLQAEFADADTWTPDALEASGRTVKMAGRLMAKRVMGKASFAQIQDESGRVQLFLQGNVLGDAYTAFKGWDVGDIVAVEGGLTRTKTGELSVKASALRLLTKSLRPLPDKWHGLSDVEQRYRQRYVDLIVTPEAREVFIKRSKIIRAMRAWLDARRFLEVETPMMHYIPGGATAKPFTTHHNALDLDLYLRVAPELYLKRLVVGGLERVYEINRNFRNEGVSTRHNPEFTMLELYEAYATYHEIMDLTEQVIRDTAQSVLGTTQVSWDGADIDLAPAFRRWRMDEAVRHHNPEISAADCTDRDALLRHCERLKIRVKPSYGWGKLLLEIFEATVEHTLVQPTFITDHPVEVSPLARSSDTEPGYTDRFELFINGKELANGFSELNDPEDQAARFQAQVQAKDGGDDEAMHFDADYIRALEYGMPPTGGLGIGIDRLVMLLTGSTSIRDVLLFPYMRPEA</sequence>
<feature type="chain" id="PRO_1000012965" description="Lysine--tRNA ligase">
    <location>
        <begin position="1"/>
        <end position="505"/>
    </location>
</feature>
<feature type="binding site" evidence="1">
    <location>
        <position position="415"/>
    </location>
    <ligand>
        <name>Mg(2+)</name>
        <dbReference type="ChEBI" id="CHEBI:18420"/>
        <label>1</label>
    </ligand>
</feature>
<feature type="binding site" evidence="1">
    <location>
        <position position="422"/>
    </location>
    <ligand>
        <name>Mg(2+)</name>
        <dbReference type="ChEBI" id="CHEBI:18420"/>
        <label>1</label>
    </ligand>
</feature>
<feature type="binding site" evidence="1">
    <location>
        <position position="422"/>
    </location>
    <ligand>
        <name>Mg(2+)</name>
        <dbReference type="ChEBI" id="CHEBI:18420"/>
        <label>2</label>
    </ligand>
</feature>
<gene>
    <name evidence="1" type="primary">lysS</name>
    <name type="ordered locus">XOO2726</name>
</gene>
<reference key="1">
    <citation type="journal article" date="2005" name="Jpn. Agric. Res. Q.">
        <title>Genome sequence of Xanthomonas oryzae pv. oryzae suggests contribution of large numbers of effector genes and insertion sequences to its race diversity.</title>
        <authorList>
            <person name="Ochiai H."/>
            <person name="Inoue Y."/>
            <person name="Takeya M."/>
            <person name="Sasaki A."/>
            <person name="Kaku H."/>
        </authorList>
    </citation>
    <scope>NUCLEOTIDE SEQUENCE [LARGE SCALE GENOMIC DNA]</scope>
    <source>
        <strain>MAFF 311018</strain>
    </source>
</reference>
<proteinExistence type="inferred from homology"/>
<comment type="catalytic activity">
    <reaction evidence="1">
        <text>tRNA(Lys) + L-lysine + ATP = L-lysyl-tRNA(Lys) + AMP + diphosphate</text>
        <dbReference type="Rhea" id="RHEA:20792"/>
        <dbReference type="Rhea" id="RHEA-COMP:9696"/>
        <dbReference type="Rhea" id="RHEA-COMP:9697"/>
        <dbReference type="ChEBI" id="CHEBI:30616"/>
        <dbReference type="ChEBI" id="CHEBI:32551"/>
        <dbReference type="ChEBI" id="CHEBI:33019"/>
        <dbReference type="ChEBI" id="CHEBI:78442"/>
        <dbReference type="ChEBI" id="CHEBI:78529"/>
        <dbReference type="ChEBI" id="CHEBI:456215"/>
        <dbReference type="EC" id="6.1.1.6"/>
    </reaction>
</comment>
<comment type="cofactor">
    <cofactor evidence="1">
        <name>Mg(2+)</name>
        <dbReference type="ChEBI" id="CHEBI:18420"/>
    </cofactor>
    <text evidence="1">Binds 3 Mg(2+) ions per subunit.</text>
</comment>
<comment type="subunit">
    <text evidence="1">Homodimer.</text>
</comment>
<comment type="subcellular location">
    <subcellularLocation>
        <location evidence="1">Cytoplasm</location>
    </subcellularLocation>
</comment>
<comment type="similarity">
    <text evidence="1">Belongs to the class-II aminoacyl-tRNA synthetase family.</text>
</comment>
<evidence type="ECO:0000255" key="1">
    <source>
        <dbReference type="HAMAP-Rule" id="MF_00252"/>
    </source>
</evidence>
<accession>Q2P1U6</accession>